<organism>
    <name type="scientific">Haemophilus influenzae (strain ATCC 51907 / DSM 11121 / KW20 / Rd)</name>
    <dbReference type="NCBI Taxonomy" id="71421"/>
    <lineage>
        <taxon>Bacteria</taxon>
        <taxon>Pseudomonadati</taxon>
        <taxon>Pseudomonadota</taxon>
        <taxon>Gammaproteobacteria</taxon>
        <taxon>Pasteurellales</taxon>
        <taxon>Pasteurellaceae</taxon>
        <taxon>Haemophilus</taxon>
    </lineage>
</organism>
<feature type="chain" id="PRO_0000192385" description="Shikimate kinase">
    <location>
        <begin position="1"/>
        <end position="180"/>
    </location>
</feature>
<feature type="binding site" evidence="1">
    <location>
        <begin position="14"/>
        <end position="19"/>
    </location>
    <ligand>
        <name>ATP</name>
        <dbReference type="ChEBI" id="CHEBI:30616"/>
    </ligand>
</feature>
<feature type="binding site" evidence="1">
    <location>
        <position position="18"/>
    </location>
    <ligand>
        <name>Mg(2+)</name>
        <dbReference type="ChEBI" id="CHEBI:18420"/>
    </ligand>
</feature>
<feature type="binding site" evidence="1">
    <location>
        <position position="36"/>
    </location>
    <ligand>
        <name>substrate</name>
    </ligand>
</feature>
<feature type="binding site" evidence="1">
    <location>
        <position position="60"/>
    </location>
    <ligand>
        <name>substrate</name>
    </ligand>
</feature>
<feature type="binding site" evidence="1">
    <location>
        <position position="82"/>
    </location>
    <ligand>
        <name>substrate</name>
    </ligand>
</feature>
<feature type="binding site" evidence="1">
    <location>
        <position position="120"/>
    </location>
    <ligand>
        <name>ATP</name>
        <dbReference type="ChEBI" id="CHEBI:30616"/>
    </ligand>
</feature>
<feature type="binding site" evidence="1">
    <location>
        <position position="140"/>
    </location>
    <ligand>
        <name>substrate</name>
    </ligand>
</feature>
<feature type="binding site" evidence="1">
    <location>
        <position position="157"/>
    </location>
    <ligand>
        <name>ATP</name>
        <dbReference type="ChEBI" id="CHEBI:30616"/>
    </ligand>
</feature>
<sequence length="180" mass="20292">MAEKRNIFLVGPMGAGKSTIGRQLAQQLNMDFIDSDAVIEERTGADISWIFDLEGEDGFRKREERIINELTQMQGIVLSTGGGAVLSKENRNYLSARGIVIYLETTVEKQFQRTQRDKKRPLLQDAENPRQVLEDLAKIRNPLYEEIADITLPTDEQNAKIMVNQIVDLIDNMNGLNGAL</sequence>
<dbReference type="EC" id="2.7.1.71" evidence="1"/>
<dbReference type="EMBL" id="L42023">
    <property type="protein sequence ID" value="AAC21875.1"/>
    <property type="molecule type" value="Genomic_DNA"/>
</dbReference>
<dbReference type="PIR" id="F64054">
    <property type="entry name" value="F64054"/>
</dbReference>
<dbReference type="RefSeq" id="NP_438376.1">
    <property type="nucleotide sequence ID" value="NC_000907.1"/>
</dbReference>
<dbReference type="SMR" id="P43880"/>
<dbReference type="STRING" id="71421.HI_0207"/>
<dbReference type="EnsemblBacteria" id="AAC21875">
    <property type="protein sequence ID" value="AAC21875"/>
    <property type="gene ID" value="HI_0207"/>
</dbReference>
<dbReference type="KEGG" id="hin:HI_0207"/>
<dbReference type="PATRIC" id="fig|71421.8.peg.212"/>
<dbReference type="eggNOG" id="COG0703">
    <property type="taxonomic scope" value="Bacteria"/>
</dbReference>
<dbReference type="HOGENOM" id="CLU_057607_2_2_6"/>
<dbReference type="OrthoDB" id="9800332at2"/>
<dbReference type="PhylomeDB" id="P43880"/>
<dbReference type="BioCyc" id="HINF71421:G1GJ1-218-MONOMER"/>
<dbReference type="UniPathway" id="UPA00053">
    <property type="reaction ID" value="UER00088"/>
</dbReference>
<dbReference type="Proteomes" id="UP000000579">
    <property type="component" value="Chromosome"/>
</dbReference>
<dbReference type="GO" id="GO:0005829">
    <property type="term" value="C:cytosol"/>
    <property type="evidence" value="ECO:0000318"/>
    <property type="project" value="GO_Central"/>
</dbReference>
<dbReference type="GO" id="GO:0005524">
    <property type="term" value="F:ATP binding"/>
    <property type="evidence" value="ECO:0007669"/>
    <property type="project" value="UniProtKB-UniRule"/>
</dbReference>
<dbReference type="GO" id="GO:0000287">
    <property type="term" value="F:magnesium ion binding"/>
    <property type="evidence" value="ECO:0007669"/>
    <property type="project" value="UniProtKB-UniRule"/>
</dbReference>
<dbReference type="GO" id="GO:0004765">
    <property type="term" value="F:shikimate kinase activity"/>
    <property type="evidence" value="ECO:0000318"/>
    <property type="project" value="GO_Central"/>
</dbReference>
<dbReference type="GO" id="GO:0008652">
    <property type="term" value="P:amino acid biosynthetic process"/>
    <property type="evidence" value="ECO:0007669"/>
    <property type="project" value="UniProtKB-KW"/>
</dbReference>
<dbReference type="GO" id="GO:0009073">
    <property type="term" value="P:aromatic amino acid family biosynthetic process"/>
    <property type="evidence" value="ECO:0007669"/>
    <property type="project" value="UniProtKB-KW"/>
</dbReference>
<dbReference type="GO" id="GO:0009423">
    <property type="term" value="P:chorismate biosynthetic process"/>
    <property type="evidence" value="ECO:0007669"/>
    <property type="project" value="UniProtKB-UniRule"/>
</dbReference>
<dbReference type="CDD" id="cd00464">
    <property type="entry name" value="SK"/>
    <property type="match status" value="1"/>
</dbReference>
<dbReference type="FunFam" id="3.40.50.300:FF:000099">
    <property type="entry name" value="Shikimate kinase 1"/>
    <property type="match status" value="1"/>
</dbReference>
<dbReference type="Gene3D" id="3.40.50.300">
    <property type="entry name" value="P-loop containing nucleotide triphosphate hydrolases"/>
    <property type="match status" value="1"/>
</dbReference>
<dbReference type="HAMAP" id="MF_00109">
    <property type="entry name" value="Shikimate_kinase"/>
    <property type="match status" value="1"/>
</dbReference>
<dbReference type="InterPro" id="IPR027417">
    <property type="entry name" value="P-loop_NTPase"/>
</dbReference>
<dbReference type="InterPro" id="IPR031322">
    <property type="entry name" value="Shikimate/glucono_kinase"/>
</dbReference>
<dbReference type="InterPro" id="IPR000623">
    <property type="entry name" value="Shikimate_kinase/TSH1"/>
</dbReference>
<dbReference type="InterPro" id="IPR023000">
    <property type="entry name" value="Shikimate_kinase_CS"/>
</dbReference>
<dbReference type="NCBIfam" id="NF003456">
    <property type="entry name" value="PRK05057.1"/>
    <property type="match status" value="1"/>
</dbReference>
<dbReference type="PANTHER" id="PTHR21087">
    <property type="entry name" value="SHIKIMATE KINASE"/>
    <property type="match status" value="1"/>
</dbReference>
<dbReference type="PANTHER" id="PTHR21087:SF16">
    <property type="entry name" value="SHIKIMATE KINASE 1, CHLOROPLASTIC"/>
    <property type="match status" value="1"/>
</dbReference>
<dbReference type="Pfam" id="PF01202">
    <property type="entry name" value="SKI"/>
    <property type="match status" value="1"/>
</dbReference>
<dbReference type="PRINTS" id="PR01100">
    <property type="entry name" value="SHIKIMTKNASE"/>
</dbReference>
<dbReference type="SUPFAM" id="SSF52540">
    <property type="entry name" value="P-loop containing nucleoside triphosphate hydrolases"/>
    <property type="match status" value="1"/>
</dbReference>
<dbReference type="PROSITE" id="PS01128">
    <property type="entry name" value="SHIKIMATE_KINASE"/>
    <property type="match status" value="1"/>
</dbReference>
<comment type="function">
    <text evidence="1">Catalyzes the specific phosphorylation of the 3-hydroxyl group of shikimic acid using ATP as a cosubstrate.</text>
</comment>
<comment type="catalytic activity">
    <reaction evidence="1">
        <text>shikimate + ATP = 3-phosphoshikimate + ADP + H(+)</text>
        <dbReference type="Rhea" id="RHEA:13121"/>
        <dbReference type="ChEBI" id="CHEBI:15378"/>
        <dbReference type="ChEBI" id="CHEBI:30616"/>
        <dbReference type="ChEBI" id="CHEBI:36208"/>
        <dbReference type="ChEBI" id="CHEBI:145989"/>
        <dbReference type="ChEBI" id="CHEBI:456216"/>
        <dbReference type="EC" id="2.7.1.71"/>
    </reaction>
</comment>
<comment type="cofactor">
    <cofactor evidence="1">
        <name>Mg(2+)</name>
        <dbReference type="ChEBI" id="CHEBI:18420"/>
    </cofactor>
    <text evidence="1">Binds 1 Mg(2+) ion per subunit.</text>
</comment>
<comment type="pathway">
    <text evidence="1">Metabolic intermediate biosynthesis; chorismate biosynthesis; chorismate from D-erythrose 4-phosphate and phosphoenolpyruvate: step 5/7.</text>
</comment>
<comment type="subunit">
    <text evidence="1">Monomer.</text>
</comment>
<comment type="subcellular location">
    <subcellularLocation>
        <location evidence="1">Cytoplasm</location>
    </subcellularLocation>
</comment>
<comment type="similarity">
    <text evidence="1">Belongs to the shikimate kinase family.</text>
</comment>
<keyword id="KW-0028">Amino-acid biosynthesis</keyword>
<keyword id="KW-0057">Aromatic amino acid biosynthesis</keyword>
<keyword id="KW-0067">ATP-binding</keyword>
<keyword id="KW-0963">Cytoplasm</keyword>
<keyword id="KW-0418">Kinase</keyword>
<keyword id="KW-0460">Magnesium</keyword>
<keyword id="KW-0479">Metal-binding</keyword>
<keyword id="KW-0547">Nucleotide-binding</keyword>
<keyword id="KW-1185">Reference proteome</keyword>
<keyword id="KW-0808">Transferase</keyword>
<proteinExistence type="inferred from homology"/>
<evidence type="ECO:0000255" key="1">
    <source>
        <dbReference type="HAMAP-Rule" id="MF_00109"/>
    </source>
</evidence>
<protein>
    <recommendedName>
        <fullName evidence="1">Shikimate kinase</fullName>
        <shortName evidence="1">SK</shortName>
        <ecNumber evidence="1">2.7.1.71</ecNumber>
    </recommendedName>
</protein>
<accession>P43880</accession>
<gene>
    <name evidence="1" type="primary">aroK</name>
    <name type="ordered locus">HI_0207</name>
</gene>
<name>AROK_HAEIN</name>
<reference key="1">
    <citation type="journal article" date="1995" name="Science">
        <title>Whole-genome random sequencing and assembly of Haemophilus influenzae Rd.</title>
        <authorList>
            <person name="Fleischmann R.D."/>
            <person name="Adams M.D."/>
            <person name="White O."/>
            <person name="Clayton R.A."/>
            <person name="Kirkness E.F."/>
            <person name="Kerlavage A.R."/>
            <person name="Bult C.J."/>
            <person name="Tomb J.-F."/>
            <person name="Dougherty B.A."/>
            <person name="Merrick J.M."/>
            <person name="McKenney K."/>
            <person name="Sutton G.G."/>
            <person name="FitzHugh W."/>
            <person name="Fields C.A."/>
            <person name="Gocayne J.D."/>
            <person name="Scott J.D."/>
            <person name="Shirley R."/>
            <person name="Liu L.-I."/>
            <person name="Glodek A."/>
            <person name="Kelley J.M."/>
            <person name="Weidman J.F."/>
            <person name="Phillips C.A."/>
            <person name="Spriggs T."/>
            <person name="Hedblom E."/>
            <person name="Cotton M.D."/>
            <person name="Utterback T.R."/>
            <person name="Hanna M.C."/>
            <person name="Nguyen D.T."/>
            <person name="Saudek D.M."/>
            <person name="Brandon R.C."/>
            <person name="Fine L.D."/>
            <person name="Fritchman J.L."/>
            <person name="Fuhrmann J.L."/>
            <person name="Geoghagen N.S.M."/>
            <person name="Gnehm C.L."/>
            <person name="McDonald L.A."/>
            <person name="Small K.V."/>
            <person name="Fraser C.M."/>
            <person name="Smith H.O."/>
            <person name="Venter J.C."/>
        </authorList>
    </citation>
    <scope>NUCLEOTIDE SEQUENCE [LARGE SCALE GENOMIC DNA]</scope>
    <source>
        <strain>ATCC 51907 / DSM 11121 / KW20 / Rd</strain>
    </source>
</reference>